<accession>A8GS16</accession>
<comment type="catalytic activity">
    <reaction evidence="1">
        <text>tRNA(Leu) + L-leucine + ATP = L-leucyl-tRNA(Leu) + AMP + diphosphate</text>
        <dbReference type="Rhea" id="RHEA:11688"/>
        <dbReference type="Rhea" id="RHEA-COMP:9613"/>
        <dbReference type="Rhea" id="RHEA-COMP:9622"/>
        <dbReference type="ChEBI" id="CHEBI:30616"/>
        <dbReference type="ChEBI" id="CHEBI:33019"/>
        <dbReference type="ChEBI" id="CHEBI:57427"/>
        <dbReference type="ChEBI" id="CHEBI:78442"/>
        <dbReference type="ChEBI" id="CHEBI:78494"/>
        <dbReference type="ChEBI" id="CHEBI:456215"/>
        <dbReference type="EC" id="6.1.1.4"/>
    </reaction>
</comment>
<comment type="subcellular location">
    <subcellularLocation>
        <location evidence="1">Cytoplasm</location>
    </subcellularLocation>
</comment>
<comment type="similarity">
    <text evidence="1">Belongs to the class-I aminoacyl-tRNA synthetase family.</text>
</comment>
<sequence length="835" mass="96663">MNQIEQKWQYIWQEEKAFEVSNASSKPKYYVLEMLPYPSGKIHVGHVRNYSIGDVIARFMTMQGFNVLHPMGWDAFGLPAENAAINNNSHPKKWTYSNIKNMKKQLKSMGFSYDWSREINSCDPEYYKHEQKFFLELYERNLAYQKESFVNWDPVDNTVLANEQVVDGRGWRSGAIVAKRYLKQWFLKITDYAEELLNEIQNLKEWPEAVRSMQEKWIGKSIGANFHFKIKDNEETTIEVFSTKPETIFGASFIGIAFNHPIIERLVSKTPEILAFITQCSHITRSSKLEKAEKEGVFTGLFVTHPFDSNIVLPVIITNFVLMDYGTGAIFGCPAHDECDHELAVKMNLSIKQVIKADMDVQKTAYTEDGILINSDFLNGLTSNEAKQEVIREFEKLGIGKRSVNYRLKDWGISRQRFWGCPIPMIHCEICGIVPVPYKDLPVTLPDDVNFDGHGNPLDHHPSWKHVNCPKCDKPAVRETDTFDTFFESSWYFMRYCNSNATEMTDKKACDYWLPVDKYIGGIEHAVMHLLYARFFTKVMNEQNYVSVQEPFKGLFTQGMVLHATYKDEHNNWLYPEEVVKKGNEFFHKESNNRVVQGRIEKMSKSKKNLIDLETMQEQYGADAIRLFVLSDSPPEKDLEWSASGIEGCSRFINKLEYMFKAIDSLKDDVNSEVNKELNRLVHFTIKHVAEDIKHFALNRAIARMRELSNSISAEISKDKIDVKTVRHGFNVLVQLLNPFIPHITEEIWQKLGNKERLYNLSFPAFDESMLELDTYIMAVQVNGKLRDTYEFKTSVSEDEIKQVTVSLPKVQKFLEGKEPKKIILVPRKIVNILV</sequence>
<name>SYL_RICRS</name>
<keyword id="KW-0030">Aminoacyl-tRNA synthetase</keyword>
<keyword id="KW-0067">ATP-binding</keyword>
<keyword id="KW-0963">Cytoplasm</keyword>
<keyword id="KW-0436">Ligase</keyword>
<keyword id="KW-0547">Nucleotide-binding</keyword>
<keyword id="KW-0648">Protein biosynthesis</keyword>
<gene>
    <name evidence="1" type="primary">leuS</name>
    <name type="ordered locus">A1G_03300</name>
</gene>
<proteinExistence type="inferred from homology"/>
<organism>
    <name type="scientific">Rickettsia rickettsii (strain Sheila Smith)</name>
    <dbReference type="NCBI Taxonomy" id="392021"/>
    <lineage>
        <taxon>Bacteria</taxon>
        <taxon>Pseudomonadati</taxon>
        <taxon>Pseudomonadota</taxon>
        <taxon>Alphaproteobacteria</taxon>
        <taxon>Rickettsiales</taxon>
        <taxon>Rickettsiaceae</taxon>
        <taxon>Rickettsieae</taxon>
        <taxon>Rickettsia</taxon>
        <taxon>spotted fever group</taxon>
    </lineage>
</organism>
<dbReference type="EC" id="6.1.1.4" evidence="1"/>
<dbReference type="EMBL" id="CP000848">
    <property type="protein sequence ID" value="ABV76191.1"/>
    <property type="molecule type" value="Genomic_DNA"/>
</dbReference>
<dbReference type="RefSeq" id="WP_012150778.1">
    <property type="nucleotide sequence ID" value="NZ_CP121767.1"/>
</dbReference>
<dbReference type="SMR" id="A8GS16"/>
<dbReference type="GeneID" id="79937331"/>
<dbReference type="KEGG" id="rri:A1G_03300"/>
<dbReference type="HOGENOM" id="CLU_004427_0_0_5"/>
<dbReference type="Proteomes" id="UP000006832">
    <property type="component" value="Chromosome"/>
</dbReference>
<dbReference type="GO" id="GO:0005737">
    <property type="term" value="C:cytoplasm"/>
    <property type="evidence" value="ECO:0007669"/>
    <property type="project" value="UniProtKB-SubCell"/>
</dbReference>
<dbReference type="GO" id="GO:0002161">
    <property type="term" value="F:aminoacyl-tRNA deacylase activity"/>
    <property type="evidence" value="ECO:0007669"/>
    <property type="project" value="InterPro"/>
</dbReference>
<dbReference type="GO" id="GO:0005524">
    <property type="term" value="F:ATP binding"/>
    <property type="evidence" value="ECO:0007669"/>
    <property type="project" value="UniProtKB-UniRule"/>
</dbReference>
<dbReference type="GO" id="GO:0004823">
    <property type="term" value="F:leucine-tRNA ligase activity"/>
    <property type="evidence" value="ECO:0007669"/>
    <property type="project" value="UniProtKB-UniRule"/>
</dbReference>
<dbReference type="GO" id="GO:0006429">
    <property type="term" value="P:leucyl-tRNA aminoacylation"/>
    <property type="evidence" value="ECO:0007669"/>
    <property type="project" value="UniProtKB-UniRule"/>
</dbReference>
<dbReference type="CDD" id="cd07958">
    <property type="entry name" value="Anticodon_Ia_Leu_BEm"/>
    <property type="match status" value="1"/>
</dbReference>
<dbReference type="CDD" id="cd00812">
    <property type="entry name" value="LeuRS_core"/>
    <property type="match status" value="1"/>
</dbReference>
<dbReference type="FunFam" id="1.10.730.10:FF:000081">
    <property type="entry name" value="Leucine--tRNA ligase"/>
    <property type="match status" value="1"/>
</dbReference>
<dbReference type="FunFam" id="3.10.20.590:FF:000001">
    <property type="entry name" value="Leucine--tRNA ligase"/>
    <property type="match status" value="1"/>
</dbReference>
<dbReference type="FunFam" id="3.40.50.620:FF:000003">
    <property type="entry name" value="Leucine--tRNA ligase"/>
    <property type="match status" value="1"/>
</dbReference>
<dbReference type="FunFam" id="3.40.50.620:FF:000051">
    <property type="entry name" value="Leucine--tRNA ligase"/>
    <property type="match status" value="1"/>
</dbReference>
<dbReference type="Gene3D" id="2.20.28.290">
    <property type="match status" value="1"/>
</dbReference>
<dbReference type="Gene3D" id="3.10.20.590">
    <property type="match status" value="1"/>
</dbReference>
<dbReference type="Gene3D" id="3.40.50.620">
    <property type="entry name" value="HUPs"/>
    <property type="match status" value="2"/>
</dbReference>
<dbReference type="Gene3D" id="1.10.730.10">
    <property type="entry name" value="Isoleucyl-tRNA Synthetase, Domain 1"/>
    <property type="match status" value="1"/>
</dbReference>
<dbReference type="HAMAP" id="MF_00049_B">
    <property type="entry name" value="Leu_tRNA_synth_B"/>
    <property type="match status" value="1"/>
</dbReference>
<dbReference type="InterPro" id="IPR001412">
    <property type="entry name" value="aa-tRNA-synth_I_CS"/>
</dbReference>
<dbReference type="InterPro" id="IPR002300">
    <property type="entry name" value="aa-tRNA-synth_Ia"/>
</dbReference>
<dbReference type="InterPro" id="IPR002302">
    <property type="entry name" value="Leu-tRNA-ligase"/>
</dbReference>
<dbReference type="InterPro" id="IPR025709">
    <property type="entry name" value="Leu_tRNA-synth_edit"/>
</dbReference>
<dbReference type="InterPro" id="IPR013155">
    <property type="entry name" value="M/V/L/I-tRNA-synth_anticd-bd"/>
</dbReference>
<dbReference type="InterPro" id="IPR015413">
    <property type="entry name" value="Methionyl/Leucyl_tRNA_Synth"/>
</dbReference>
<dbReference type="InterPro" id="IPR014729">
    <property type="entry name" value="Rossmann-like_a/b/a_fold"/>
</dbReference>
<dbReference type="InterPro" id="IPR009080">
    <property type="entry name" value="tRNAsynth_Ia_anticodon-bd"/>
</dbReference>
<dbReference type="InterPro" id="IPR009008">
    <property type="entry name" value="Val/Leu/Ile-tRNA-synth_edit"/>
</dbReference>
<dbReference type="NCBIfam" id="TIGR00396">
    <property type="entry name" value="leuS_bact"/>
    <property type="match status" value="1"/>
</dbReference>
<dbReference type="PANTHER" id="PTHR43740:SF2">
    <property type="entry name" value="LEUCINE--TRNA LIGASE, MITOCHONDRIAL"/>
    <property type="match status" value="1"/>
</dbReference>
<dbReference type="PANTHER" id="PTHR43740">
    <property type="entry name" value="LEUCYL-TRNA SYNTHETASE"/>
    <property type="match status" value="1"/>
</dbReference>
<dbReference type="Pfam" id="PF08264">
    <property type="entry name" value="Anticodon_1"/>
    <property type="match status" value="1"/>
</dbReference>
<dbReference type="Pfam" id="PF00133">
    <property type="entry name" value="tRNA-synt_1"/>
    <property type="match status" value="2"/>
</dbReference>
<dbReference type="Pfam" id="PF13603">
    <property type="entry name" value="tRNA-synt_1_2"/>
    <property type="match status" value="1"/>
</dbReference>
<dbReference type="Pfam" id="PF09334">
    <property type="entry name" value="tRNA-synt_1g"/>
    <property type="match status" value="1"/>
</dbReference>
<dbReference type="PRINTS" id="PR00985">
    <property type="entry name" value="TRNASYNTHLEU"/>
</dbReference>
<dbReference type="SUPFAM" id="SSF47323">
    <property type="entry name" value="Anticodon-binding domain of a subclass of class I aminoacyl-tRNA synthetases"/>
    <property type="match status" value="1"/>
</dbReference>
<dbReference type="SUPFAM" id="SSF52374">
    <property type="entry name" value="Nucleotidylyl transferase"/>
    <property type="match status" value="1"/>
</dbReference>
<dbReference type="SUPFAM" id="SSF50677">
    <property type="entry name" value="ValRS/IleRS/LeuRS editing domain"/>
    <property type="match status" value="1"/>
</dbReference>
<dbReference type="PROSITE" id="PS00178">
    <property type="entry name" value="AA_TRNA_LIGASE_I"/>
    <property type="match status" value="1"/>
</dbReference>
<evidence type="ECO:0000255" key="1">
    <source>
        <dbReference type="HAMAP-Rule" id="MF_00049"/>
    </source>
</evidence>
<protein>
    <recommendedName>
        <fullName evidence="1">Leucine--tRNA ligase</fullName>
        <ecNumber evidence="1">6.1.1.4</ecNumber>
    </recommendedName>
    <alternativeName>
        <fullName evidence="1">Leucyl-tRNA synthetase</fullName>
        <shortName evidence="1">LeuRS</shortName>
    </alternativeName>
</protein>
<reference key="1">
    <citation type="submission" date="2007-09" db="EMBL/GenBank/DDBJ databases">
        <title>Complete genome sequence of Rickettsia rickettsii.</title>
        <authorList>
            <person name="Madan A."/>
            <person name="Fahey J."/>
            <person name="Helton E."/>
            <person name="Ketteman M."/>
            <person name="Madan A."/>
            <person name="Rodrigues S."/>
            <person name="Sanchez A."/>
            <person name="Dasch G."/>
            <person name="Eremeeva M."/>
        </authorList>
    </citation>
    <scope>NUCLEOTIDE SEQUENCE [LARGE SCALE GENOMIC DNA]</scope>
    <source>
        <strain>Sheila Smith</strain>
    </source>
</reference>
<feature type="chain" id="PRO_1000009418" description="Leucine--tRNA ligase">
    <location>
        <begin position="1"/>
        <end position="835"/>
    </location>
</feature>
<feature type="short sequence motif" description="'HIGH' region">
    <location>
        <begin position="36"/>
        <end position="46"/>
    </location>
</feature>
<feature type="short sequence motif" description="'KMSKS' region">
    <location>
        <begin position="602"/>
        <end position="606"/>
    </location>
</feature>
<feature type="binding site" evidence="1">
    <location>
        <position position="605"/>
    </location>
    <ligand>
        <name>ATP</name>
        <dbReference type="ChEBI" id="CHEBI:30616"/>
    </ligand>
</feature>